<organism>
    <name type="scientific">Enterobacteria phage T3</name>
    <name type="common">Bacteriophage T3</name>
    <dbReference type="NCBI Taxonomy" id="10759"/>
    <lineage>
        <taxon>Viruses</taxon>
        <taxon>Duplodnaviria</taxon>
        <taxon>Heunggongvirae</taxon>
        <taxon>Uroviricota</taxon>
        <taxon>Caudoviricetes</taxon>
        <taxon>Autographiviridae</taxon>
        <taxon>Studiervirinae</taxon>
        <taxon>Teetrevirus</taxon>
        <taxon>Teetrevirus T3</taxon>
    </lineage>
</organism>
<gene>
    <name type="primary">1.6</name>
</gene>
<accession>P07718</accession>
<reference key="1">
    <citation type="journal article" date="1987" name="J. Mol. Biol.">
        <title>Sequence of a conditionally essential region of bacteriophage T3, including the primary origin of DNA replication.</title>
        <authorList>
            <person name="Schmitt M.P."/>
            <person name="Beck P.J."/>
            <person name="Kearney C.A."/>
            <person name="Spence J.L."/>
            <person name="Digiovanni D."/>
            <person name="Condreay J.P."/>
            <person name="Molineux I.J."/>
        </authorList>
    </citation>
    <scope>NUCLEOTIDE SEQUENCE [GENOMIC DNA]</scope>
    <source>
        <strain>Luria</strain>
    </source>
</reference>
<name>Y16_BPT3</name>
<organismHost>
    <name type="scientific">Escherichia coli</name>
    <dbReference type="NCBI Taxonomy" id="562"/>
</organismHost>
<dbReference type="EMBL" id="X17255">
    <property type="protein sequence ID" value="CAA35127.1"/>
    <property type="molecule type" value="Genomic_DNA"/>
</dbReference>
<dbReference type="EMBL" id="X05031">
    <property type="protein sequence ID" value="CAA28702.1"/>
    <property type="molecule type" value="Genomic_DNA"/>
</dbReference>
<dbReference type="PIR" id="S09541">
    <property type="entry name" value="S09541"/>
</dbReference>
<dbReference type="RefSeq" id="NP_523307.1">
    <property type="nucleotide sequence ID" value="NC_003298.1"/>
</dbReference>
<dbReference type="KEGG" id="vg:927443"/>
<dbReference type="OrthoDB" id="18526at10239"/>
<dbReference type="Pfam" id="PF06726">
    <property type="entry name" value="BC10"/>
    <property type="match status" value="1"/>
</dbReference>
<proteinExistence type="predicted"/>
<feature type="chain" id="PRO_0000106474" description="Uncharacterized gene 1.6 protein">
    <location>
        <begin position="1"/>
        <end position="85"/>
    </location>
</feature>
<sequence>MRLHFNTSNGIFSVRREDRSTAVASERNAKLPLIGSVVPLSPRVHLLITRGEFIKAMNKERPHLEAVVTYWPRIRLFVKLIKEVL</sequence>
<protein>
    <recommendedName>
        <fullName>Uncharacterized gene 1.6 protein</fullName>
    </recommendedName>
</protein>